<comment type="function">
    <text evidence="2 6">Clathrin is the major protein of the polyhedral coat of coated pits and vesicles (By similarity). Mediates endocytosis and is required for a correct polar distribution of PIN auxin transporters.</text>
</comment>
<comment type="subunit">
    <text evidence="3 7">Clathrin triskelions, composed of 3 heavy chains and 3 light chains, are the basic subunits of the clathrin coat (By similarity). Interacts with SCYL2B (PubMed:28751315).</text>
</comment>
<comment type="interaction">
    <interactant intactId="EBI-1162845">
        <id>Q0WNJ6</id>
    </interactant>
    <interactant intactId="EBI-1162785">
        <id>Q8VY07</id>
        <label>EPSIN1</label>
    </interactant>
    <organismsDiffer>false</organismsDiffer>
    <experiments>3</experiments>
</comment>
<comment type="subcellular location">
    <subcellularLocation>
        <location evidence="2">Cytoplasmic vesicle membrane</location>
        <topology evidence="2">Peripheral membrane protein</topology>
        <orientation evidence="2">Cytoplasmic side</orientation>
    </subcellularLocation>
    <subcellularLocation>
        <location evidence="2">Membrane</location>
        <location evidence="2">Coated pit</location>
        <topology evidence="2">Peripheral membrane protein</topology>
        <orientation evidence="2">Cytoplasmic side</orientation>
    </subcellularLocation>
    <text evidence="2">Cytoplasmic face of coated pits and vesicles.</text>
</comment>
<comment type="domain">
    <text>The C-terminal third of the heavy chains forms the hub of the triskelion. This region contains the trimerization domain and the light-chain binding domain involved in the assembly of the clathrin lattice.</text>
</comment>
<comment type="domain">
    <text evidence="1">The N-terminal seven-bladed beta-propeller is formed by WD40-like repeats, and projects inward from the polyhedral outer clathrin coat. It constitutes a major protein-protein interaction node (By similarity).</text>
</comment>
<comment type="similarity">
    <text evidence="9">Belongs to the clathrin heavy chain family.</text>
</comment>
<comment type="sequence caution" evidence="9">
    <conflict type="erroneous gene model prediction">
        <sequence resource="EMBL-CDS" id="AAF01510"/>
    </conflict>
</comment>
<comment type="sequence caution" evidence="9">
    <conflict type="erroneous gene model prediction">
        <sequence resource="EMBL-CDS" id="AAG50967"/>
    </conflict>
</comment>
<feature type="initiator methionine" description="Removed" evidence="13">
    <location>
        <position position="1"/>
    </location>
</feature>
<feature type="chain" id="PRO_0000413949" description="Clathrin heavy chain 1">
    <location>
        <begin position="2"/>
        <end position="1705"/>
    </location>
</feature>
<feature type="repeat" description="CHCR 1" evidence="5">
    <location>
        <begin position="551"/>
        <end position="697"/>
    </location>
</feature>
<feature type="repeat" description="CHCR 2" evidence="5">
    <location>
        <begin position="700"/>
        <end position="842"/>
    </location>
</feature>
<feature type="repeat" description="CHCR 3" evidence="5">
    <location>
        <begin position="847"/>
        <end position="986"/>
    </location>
</feature>
<feature type="repeat" description="CHCR 4" evidence="5">
    <location>
        <begin position="993"/>
        <end position="1138"/>
    </location>
</feature>
<feature type="repeat" description="CHCR 5" evidence="5">
    <location>
        <begin position="1142"/>
        <end position="1283"/>
    </location>
</feature>
<feature type="repeat" description="CHCR 6" evidence="5">
    <location>
        <begin position="1288"/>
        <end position="1434"/>
    </location>
</feature>
<feature type="repeat" description="CHCR 7" evidence="5">
    <location>
        <begin position="1437"/>
        <end position="1580"/>
    </location>
</feature>
<feature type="region of interest" description="Globular terminal domain" evidence="1">
    <location>
        <begin position="2"/>
        <end position="492"/>
    </location>
</feature>
<feature type="region of interest" description="WD40-like repeat 1" evidence="4">
    <location>
        <begin position="25"/>
        <end position="67"/>
    </location>
</feature>
<feature type="region of interest" description="WD40-like repeat 2" evidence="4">
    <location>
        <begin position="68"/>
        <end position="113"/>
    </location>
</feature>
<feature type="region of interest" description="WD40-like repeat 3" evidence="4">
    <location>
        <begin position="114"/>
        <end position="155"/>
    </location>
</feature>
<feature type="region of interest" description="WD40-like repeat 4" evidence="4">
    <location>
        <begin position="156"/>
        <end position="205"/>
    </location>
</feature>
<feature type="region of interest" description="WD40-like repeat 5" evidence="4">
    <location>
        <begin position="206"/>
        <end position="270"/>
    </location>
</feature>
<feature type="region of interest" description="WD40-like repeat 6" evidence="4">
    <location>
        <begin position="271"/>
        <end position="314"/>
    </location>
</feature>
<feature type="region of interest" description="WD40-like repeat 7" evidence="4">
    <location>
        <begin position="315"/>
        <end position="343"/>
    </location>
</feature>
<feature type="region of interest" description="Binding site for the uncoating ATPase, involved in lattice disassembly" evidence="1">
    <location>
        <begin position="462"/>
        <end position="478"/>
    </location>
</feature>
<feature type="region of interest" description="Flexible linker" evidence="1">
    <location>
        <begin position="493"/>
        <end position="536"/>
    </location>
</feature>
<feature type="region of interest" description="Heavy chain arm" evidence="1">
    <location>
        <begin position="537"/>
        <end position="1705"/>
    </location>
</feature>
<feature type="region of interest" description="Distal segment" evidence="1">
    <location>
        <begin position="537"/>
        <end position="648"/>
    </location>
</feature>
<feature type="region of interest" description="Proximal segment" evidence="1">
    <location>
        <begin position="653"/>
        <end position="1705"/>
    </location>
</feature>
<feature type="region of interest" description="Involved in binding clathrin light chain" evidence="1">
    <location>
        <begin position="1227"/>
        <end position="1536"/>
    </location>
</feature>
<feature type="region of interest" description="Trimerization" evidence="1">
    <location>
        <begin position="1564"/>
        <end position="1705"/>
    </location>
</feature>
<feature type="modified residue" description="N-acetylalanine" evidence="13">
    <location>
        <position position="2"/>
    </location>
</feature>
<organism>
    <name type="scientific">Arabidopsis thaliana</name>
    <name type="common">Mouse-ear cress</name>
    <dbReference type="NCBI Taxonomy" id="3702"/>
    <lineage>
        <taxon>Eukaryota</taxon>
        <taxon>Viridiplantae</taxon>
        <taxon>Streptophyta</taxon>
        <taxon>Embryophyta</taxon>
        <taxon>Tracheophyta</taxon>
        <taxon>Spermatophyta</taxon>
        <taxon>Magnoliopsida</taxon>
        <taxon>eudicotyledons</taxon>
        <taxon>Gunneridae</taxon>
        <taxon>Pentapetalae</taxon>
        <taxon>rosids</taxon>
        <taxon>malvids</taxon>
        <taxon>Brassicales</taxon>
        <taxon>Brassicaceae</taxon>
        <taxon>Camelineae</taxon>
        <taxon>Arabidopsis</taxon>
    </lineage>
</organism>
<protein>
    <recommendedName>
        <fullName evidence="8">Clathrin heavy chain 1</fullName>
    </recommendedName>
</protein>
<gene>
    <name evidence="8" type="primary">CHC1</name>
    <name evidence="10" type="ordered locus">At3g11130</name>
    <name evidence="12" type="ORF">F11B9.30</name>
    <name evidence="11" type="ORF">F9F8.6</name>
</gene>
<proteinExistence type="evidence at protein level"/>
<reference key="1">
    <citation type="journal article" date="2000" name="Nature">
        <title>Sequence and analysis of chromosome 3 of the plant Arabidopsis thaliana.</title>
        <authorList>
            <person name="Salanoubat M."/>
            <person name="Lemcke K."/>
            <person name="Rieger M."/>
            <person name="Ansorge W."/>
            <person name="Unseld M."/>
            <person name="Fartmann B."/>
            <person name="Valle G."/>
            <person name="Bloecker H."/>
            <person name="Perez-Alonso M."/>
            <person name="Obermaier B."/>
            <person name="Delseny M."/>
            <person name="Boutry M."/>
            <person name="Grivell L.A."/>
            <person name="Mache R."/>
            <person name="Puigdomenech P."/>
            <person name="De Simone V."/>
            <person name="Choisne N."/>
            <person name="Artiguenave F."/>
            <person name="Robert C."/>
            <person name="Brottier P."/>
            <person name="Wincker P."/>
            <person name="Cattolico L."/>
            <person name="Weissenbach J."/>
            <person name="Saurin W."/>
            <person name="Quetier F."/>
            <person name="Schaefer M."/>
            <person name="Mueller-Auer S."/>
            <person name="Gabel C."/>
            <person name="Fuchs M."/>
            <person name="Benes V."/>
            <person name="Wurmbach E."/>
            <person name="Drzonek H."/>
            <person name="Erfle H."/>
            <person name="Jordan N."/>
            <person name="Bangert S."/>
            <person name="Wiedelmann R."/>
            <person name="Kranz H."/>
            <person name="Voss H."/>
            <person name="Holland R."/>
            <person name="Brandt P."/>
            <person name="Nyakatura G."/>
            <person name="Vezzi A."/>
            <person name="D'Angelo M."/>
            <person name="Pallavicini A."/>
            <person name="Toppo S."/>
            <person name="Simionati B."/>
            <person name="Conrad A."/>
            <person name="Hornischer K."/>
            <person name="Kauer G."/>
            <person name="Loehnert T.-H."/>
            <person name="Nordsiek G."/>
            <person name="Reichelt J."/>
            <person name="Scharfe M."/>
            <person name="Schoen O."/>
            <person name="Bargues M."/>
            <person name="Terol J."/>
            <person name="Climent J."/>
            <person name="Navarro P."/>
            <person name="Collado C."/>
            <person name="Perez-Perez A."/>
            <person name="Ottenwaelder B."/>
            <person name="Duchemin D."/>
            <person name="Cooke R."/>
            <person name="Laudie M."/>
            <person name="Berger-Llauro C."/>
            <person name="Purnelle B."/>
            <person name="Masuy D."/>
            <person name="de Haan M."/>
            <person name="Maarse A.C."/>
            <person name="Alcaraz J.-P."/>
            <person name="Cottet A."/>
            <person name="Casacuberta E."/>
            <person name="Monfort A."/>
            <person name="Argiriou A."/>
            <person name="Flores M."/>
            <person name="Liguori R."/>
            <person name="Vitale D."/>
            <person name="Mannhaupt G."/>
            <person name="Haase D."/>
            <person name="Schoof H."/>
            <person name="Rudd S."/>
            <person name="Zaccaria P."/>
            <person name="Mewes H.-W."/>
            <person name="Mayer K.F.X."/>
            <person name="Kaul S."/>
            <person name="Town C.D."/>
            <person name="Koo H.L."/>
            <person name="Tallon L.J."/>
            <person name="Jenkins J."/>
            <person name="Rooney T."/>
            <person name="Rizzo M."/>
            <person name="Walts A."/>
            <person name="Utterback T."/>
            <person name="Fujii C.Y."/>
            <person name="Shea T.P."/>
            <person name="Creasy T.H."/>
            <person name="Haas B."/>
            <person name="Maiti R."/>
            <person name="Wu D."/>
            <person name="Peterson J."/>
            <person name="Van Aken S."/>
            <person name="Pai G."/>
            <person name="Militscher J."/>
            <person name="Sellers P."/>
            <person name="Gill J.E."/>
            <person name="Feldblyum T.V."/>
            <person name="Preuss D."/>
            <person name="Lin X."/>
            <person name="Nierman W.C."/>
            <person name="Salzberg S.L."/>
            <person name="White O."/>
            <person name="Venter J.C."/>
            <person name="Fraser C.M."/>
            <person name="Kaneko T."/>
            <person name="Nakamura Y."/>
            <person name="Sato S."/>
            <person name="Kato T."/>
            <person name="Asamizu E."/>
            <person name="Sasamoto S."/>
            <person name="Kimura T."/>
            <person name="Idesawa K."/>
            <person name="Kawashima K."/>
            <person name="Kishida Y."/>
            <person name="Kiyokawa C."/>
            <person name="Kohara M."/>
            <person name="Matsumoto M."/>
            <person name="Matsuno A."/>
            <person name="Muraki A."/>
            <person name="Nakayama S."/>
            <person name="Nakazaki N."/>
            <person name="Shinpo S."/>
            <person name="Takeuchi C."/>
            <person name="Wada T."/>
            <person name="Watanabe A."/>
            <person name="Yamada M."/>
            <person name="Yasuda M."/>
            <person name="Tabata S."/>
        </authorList>
    </citation>
    <scope>NUCLEOTIDE SEQUENCE [LARGE SCALE GENOMIC DNA]</scope>
    <source>
        <strain>cv. Columbia</strain>
    </source>
</reference>
<reference key="2">
    <citation type="journal article" date="2017" name="Plant J.">
        <title>Araport11: a complete reannotation of the Arabidopsis thaliana reference genome.</title>
        <authorList>
            <person name="Cheng C.Y."/>
            <person name="Krishnakumar V."/>
            <person name="Chan A.P."/>
            <person name="Thibaud-Nissen F."/>
            <person name="Schobel S."/>
            <person name="Town C.D."/>
        </authorList>
    </citation>
    <scope>GENOME REANNOTATION</scope>
    <source>
        <strain>cv. Columbia</strain>
    </source>
</reference>
<reference key="3">
    <citation type="submission" date="2006-07" db="EMBL/GenBank/DDBJ databases">
        <title>Large-scale analysis of RIKEN Arabidopsis full-length (RAFL) cDNAs.</title>
        <authorList>
            <person name="Totoki Y."/>
            <person name="Seki M."/>
            <person name="Ishida J."/>
            <person name="Nakajima M."/>
            <person name="Enju A."/>
            <person name="Kamiya A."/>
            <person name="Narusaka M."/>
            <person name="Shin-i T."/>
            <person name="Nakagawa M."/>
            <person name="Sakamoto N."/>
            <person name="Oishi K."/>
            <person name="Kohara Y."/>
            <person name="Kobayashi M."/>
            <person name="Toyoda A."/>
            <person name="Sakaki Y."/>
            <person name="Sakurai T."/>
            <person name="Iida K."/>
            <person name="Akiyama K."/>
            <person name="Satou M."/>
            <person name="Toyoda T."/>
            <person name="Konagaya A."/>
            <person name="Carninci P."/>
            <person name="Kawai J."/>
            <person name="Hayashizaki Y."/>
            <person name="Shinozaki K."/>
        </authorList>
    </citation>
    <scope>NUCLEOTIDE SEQUENCE [LARGE SCALE MRNA]</scope>
    <source>
        <strain>cv. Columbia</strain>
    </source>
</reference>
<reference key="4">
    <citation type="journal article" date="2011" name="Plant Cell">
        <title>Clathrin mediates endocytosis and polar distribution of PIN auxin transporters in Arabidopsis.</title>
        <authorList>
            <person name="Kitakura S."/>
            <person name="Vanneste S."/>
            <person name="Robert S."/>
            <person name="Loefke C."/>
            <person name="Teichmann T."/>
            <person name="Tanaka H."/>
            <person name="Friml J."/>
        </authorList>
    </citation>
    <scope>FUNCTION</scope>
</reference>
<reference key="5">
    <citation type="journal article" date="2012" name="Mol. Cell. Proteomics">
        <title>Comparative large-scale characterisation of plant vs. mammal proteins reveals similar and idiosyncratic N-alpha acetylation features.</title>
        <authorList>
            <person name="Bienvenut W.V."/>
            <person name="Sumpton D."/>
            <person name="Martinez A."/>
            <person name="Lilla S."/>
            <person name="Espagne C."/>
            <person name="Meinnel T."/>
            <person name="Giglione C."/>
        </authorList>
    </citation>
    <scope>ACETYLATION [LARGE SCALE ANALYSIS] AT ALA-2</scope>
    <scope>CLEAVAGE OF INITIATOR METHIONINE [LARGE SCALE ANALYSIS]</scope>
    <scope>IDENTIFICATION BY MASS SPECTROMETRY [LARGE SCALE ANALYSIS]</scope>
</reference>
<reference key="6">
    <citation type="journal article" date="2017" name="Plant Physiol.">
        <title>SCYL2 genes are involved in clathrin-mediated vesicle trafficking and essential for plant growth.</title>
        <authorList>
            <person name="Jung J.-Y."/>
            <person name="Lee D.W."/>
            <person name="Ryu S.B."/>
            <person name="Hwang I."/>
            <person name="Schachtman D.P."/>
        </authorList>
    </citation>
    <scope>INTERACTION WITH SCYL2B</scope>
    <source>
        <strain>cv. Columbia</strain>
    </source>
</reference>
<evidence type="ECO:0000250" key="1"/>
<evidence type="ECO:0000250" key="2">
    <source>
        <dbReference type="UniProtKB" id="P25870"/>
    </source>
</evidence>
<evidence type="ECO:0000250" key="3">
    <source>
        <dbReference type="UniProtKB" id="Q00610"/>
    </source>
</evidence>
<evidence type="ECO:0000255" key="4"/>
<evidence type="ECO:0000255" key="5">
    <source>
        <dbReference type="PROSITE-ProRule" id="PRU01006"/>
    </source>
</evidence>
<evidence type="ECO:0000269" key="6">
    <source>
    </source>
</evidence>
<evidence type="ECO:0000269" key="7">
    <source>
    </source>
</evidence>
<evidence type="ECO:0000303" key="8">
    <source>
    </source>
</evidence>
<evidence type="ECO:0000305" key="9"/>
<evidence type="ECO:0000312" key="10">
    <source>
        <dbReference type="Araport" id="AT3G11130"/>
    </source>
</evidence>
<evidence type="ECO:0000312" key="11">
    <source>
        <dbReference type="EMBL" id="AAF01510.1"/>
    </source>
</evidence>
<evidence type="ECO:0000312" key="12">
    <source>
        <dbReference type="EMBL" id="AAG50967.1"/>
    </source>
</evidence>
<evidence type="ECO:0007744" key="13">
    <source>
    </source>
</evidence>
<dbReference type="EMBL" id="AC009991">
    <property type="protein sequence ID" value="AAF01510.1"/>
    <property type="status" value="ALT_SEQ"/>
    <property type="molecule type" value="Genomic_DNA"/>
</dbReference>
<dbReference type="EMBL" id="AC073395">
    <property type="protein sequence ID" value="AAG50967.1"/>
    <property type="status" value="ALT_SEQ"/>
    <property type="molecule type" value="Genomic_DNA"/>
</dbReference>
<dbReference type="EMBL" id="CP002686">
    <property type="protein sequence ID" value="AEE75005.1"/>
    <property type="molecule type" value="Genomic_DNA"/>
</dbReference>
<dbReference type="EMBL" id="AK229443">
    <property type="protein sequence ID" value="BAF01303.1"/>
    <property type="molecule type" value="mRNA"/>
</dbReference>
<dbReference type="EMBL" id="AK229949">
    <property type="protein sequence ID" value="BAF01775.1"/>
    <property type="molecule type" value="mRNA"/>
</dbReference>
<dbReference type="RefSeq" id="NP_187724.2">
    <property type="nucleotide sequence ID" value="NM_111950.3"/>
</dbReference>
<dbReference type="SMR" id="Q0WNJ6"/>
<dbReference type="BioGRID" id="5618">
    <property type="interactions" value="60"/>
</dbReference>
<dbReference type="FunCoup" id="Q0WNJ6">
    <property type="interactions" value="4974"/>
</dbReference>
<dbReference type="IntAct" id="Q0WNJ6">
    <property type="interactions" value="7"/>
</dbReference>
<dbReference type="MINT" id="Q0WNJ6"/>
<dbReference type="STRING" id="3702.Q0WNJ6"/>
<dbReference type="iPTMnet" id="Q0WNJ6"/>
<dbReference type="PaxDb" id="3702-AT3G11130.1"/>
<dbReference type="ProteomicsDB" id="246876"/>
<dbReference type="EnsemblPlants" id="AT3G11130.1">
    <property type="protein sequence ID" value="AT3G11130.1"/>
    <property type="gene ID" value="AT3G11130"/>
</dbReference>
<dbReference type="GeneID" id="820284"/>
<dbReference type="Gramene" id="AT3G11130.1">
    <property type="protein sequence ID" value="AT3G11130.1"/>
    <property type="gene ID" value="AT3G11130"/>
</dbReference>
<dbReference type="KEGG" id="ath:AT3G11130"/>
<dbReference type="Araport" id="AT3G11130"/>
<dbReference type="TAIR" id="AT3G11130">
    <property type="gene designation" value="CHC1"/>
</dbReference>
<dbReference type="eggNOG" id="KOG0985">
    <property type="taxonomic scope" value="Eukaryota"/>
</dbReference>
<dbReference type="HOGENOM" id="CLU_002136_0_0_1"/>
<dbReference type="InParanoid" id="Q0WNJ6"/>
<dbReference type="OMA" id="HCYDLLH"/>
<dbReference type="PhylomeDB" id="Q0WNJ6"/>
<dbReference type="CD-CODE" id="4299E36E">
    <property type="entry name" value="Nucleolus"/>
</dbReference>
<dbReference type="PRO" id="PR:Q0WNJ6"/>
<dbReference type="Proteomes" id="UP000006548">
    <property type="component" value="Chromosome 3"/>
</dbReference>
<dbReference type="ExpressionAtlas" id="Q0WNJ6">
    <property type="expression patterns" value="baseline and differential"/>
</dbReference>
<dbReference type="GO" id="GO:0030132">
    <property type="term" value="C:clathrin coat of coated pit"/>
    <property type="evidence" value="ECO:0007669"/>
    <property type="project" value="InterPro"/>
</dbReference>
<dbReference type="GO" id="GO:0030130">
    <property type="term" value="C:clathrin coat of trans-Golgi network vesicle"/>
    <property type="evidence" value="ECO:0007669"/>
    <property type="project" value="InterPro"/>
</dbReference>
<dbReference type="GO" id="GO:0071439">
    <property type="term" value="C:clathrin complex"/>
    <property type="evidence" value="ECO:0007669"/>
    <property type="project" value="InterPro"/>
</dbReference>
<dbReference type="GO" id="GO:0005829">
    <property type="term" value="C:cytosol"/>
    <property type="evidence" value="ECO:0007005"/>
    <property type="project" value="TAIR"/>
</dbReference>
<dbReference type="GO" id="GO:0005794">
    <property type="term" value="C:Golgi apparatus"/>
    <property type="evidence" value="ECO:0007005"/>
    <property type="project" value="TAIR"/>
</dbReference>
<dbReference type="GO" id="GO:0000325">
    <property type="term" value="C:plant-type vacuole"/>
    <property type="evidence" value="ECO:0007005"/>
    <property type="project" value="TAIR"/>
</dbReference>
<dbReference type="GO" id="GO:0005886">
    <property type="term" value="C:plasma membrane"/>
    <property type="evidence" value="ECO:0007005"/>
    <property type="project" value="TAIR"/>
</dbReference>
<dbReference type="GO" id="GO:0009506">
    <property type="term" value="C:plasmodesma"/>
    <property type="evidence" value="ECO:0007005"/>
    <property type="project" value="TAIR"/>
</dbReference>
<dbReference type="GO" id="GO:0005773">
    <property type="term" value="C:vacuole"/>
    <property type="evidence" value="ECO:0007005"/>
    <property type="project" value="TAIR"/>
</dbReference>
<dbReference type="GO" id="GO:0032051">
    <property type="term" value="F:clathrin light chain binding"/>
    <property type="evidence" value="ECO:0007669"/>
    <property type="project" value="InterPro"/>
</dbReference>
<dbReference type="GO" id="GO:0005198">
    <property type="term" value="F:structural molecule activity"/>
    <property type="evidence" value="ECO:0007669"/>
    <property type="project" value="InterPro"/>
</dbReference>
<dbReference type="GO" id="GO:0072583">
    <property type="term" value="P:clathrin-dependent endocytosis"/>
    <property type="evidence" value="ECO:0000315"/>
    <property type="project" value="TAIR"/>
</dbReference>
<dbReference type="GO" id="GO:0006897">
    <property type="term" value="P:endocytosis"/>
    <property type="evidence" value="ECO:0000315"/>
    <property type="project" value="TAIR"/>
</dbReference>
<dbReference type="GO" id="GO:0006886">
    <property type="term" value="P:intracellular protein transport"/>
    <property type="evidence" value="ECO:0007669"/>
    <property type="project" value="InterPro"/>
</dbReference>
<dbReference type="GO" id="GO:0009414">
    <property type="term" value="P:response to water deprivation"/>
    <property type="evidence" value="ECO:0000315"/>
    <property type="project" value="TAIR"/>
</dbReference>
<dbReference type="GO" id="GO:0010118">
    <property type="term" value="P:stomatal movement"/>
    <property type="evidence" value="ECO:0000315"/>
    <property type="project" value="TAIR"/>
</dbReference>
<dbReference type="GO" id="GO:0016192">
    <property type="term" value="P:vesicle-mediated transport"/>
    <property type="evidence" value="ECO:0000314"/>
    <property type="project" value="TAIR"/>
</dbReference>
<dbReference type="FunFam" id="1.25.40.10:FF:000001">
    <property type="entry name" value="Clathrin heavy chain"/>
    <property type="match status" value="1"/>
</dbReference>
<dbReference type="FunFam" id="1.25.40.10:FF:000002">
    <property type="entry name" value="Clathrin heavy chain"/>
    <property type="match status" value="1"/>
</dbReference>
<dbReference type="FunFam" id="1.25.40.10:FF:000005">
    <property type="entry name" value="Clathrin heavy chain"/>
    <property type="match status" value="1"/>
</dbReference>
<dbReference type="FunFam" id="1.25.40.10:FF:000686">
    <property type="entry name" value="Clathrin heavy chain"/>
    <property type="match status" value="1"/>
</dbReference>
<dbReference type="FunFam" id="1.25.40.730:FF:000002">
    <property type="entry name" value="Clathrin heavy chain"/>
    <property type="match status" value="1"/>
</dbReference>
<dbReference type="FunFam" id="2.130.10.110:FF:000002">
    <property type="entry name" value="Clathrin heavy chain"/>
    <property type="match status" value="1"/>
</dbReference>
<dbReference type="Gene3D" id="1.25.40.730">
    <property type="match status" value="1"/>
</dbReference>
<dbReference type="Gene3D" id="2.130.10.110">
    <property type="entry name" value="Clathrin heavy-chain terminal domain"/>
    <property type="match status" value="1"/>
</dbReference>
<dbReference type="Gene3D" id="1.25.40.10">
    <property type="entry name" value="Tetratricopeptide repeat domain"/>
    <property type="match status" value="3"/>
</dbReference>
<dbReference type="InterPro" id="IPR016024">
    <property type="entry name" value="ARM-type_fold"/>
</dbReference>
<dbReference type="InterPro" id="IPR055358">
    <property type="entry name" value="CHCR"/>
</dbReference>
<dbReference type="InterPro" id="IPR000547">
    <property type="entry name" value="Clathrin_H-chain/VPS_repeat"/>
</dbReference>
<dbReference type="InterPro" id="IPR015348">
    <property type="entry name" value="Clathrin_H-chain_linker_core"/>
</dbReference>
<dbReference type="InterPro" id="IPR016025">
    <property type="entry name" value="Clathrin_H-chain_N"/>
</dbReference>
<dbReference type="InterPro" id="IPR022365">
    <property type="entry name" value="Clathrin_H-chain_propeller_rpt"/>
</dbReference>
<dbReference type="InterPro" id="IPR016341">
    <property type="entry name" value="Clathrin_heavy_chain"/>
</dbReference>
<dbReference type="InterPro" id="IPR011990">
    <property type="entry name" value="TPR-like_helical_dom_sf"/>
</dbReference>
<dbReference type="PANTHER" id="PTHR10292:SF34">
    <property type="entry name" value="CLATHRIN HEAVY CHAIN 1-RELATED"/>
    <property type="match status" value="1"/>
</dbReference>
<dbReference type="PANTHER" id="PTHR10292">
    <property type="entry name" value="CLATHRIN HEAVY CHAIN RELATED"/>
    <property type="match status" value="1"/>
</dbReference>
<dbReference type="Pfam" id="PF00637">
    <property type="entry name" value="Clathrin"/>
    <property type="match status" value="7"/>
</dbReference>
<dbReference type="Pfam" id="PF09268">
    <property type="entry name" value="Clathrin-link"/>
    <property type="match status" value="1"/>
</dbReference>
<dbReference type="Pfam" id="PF13838">
    <property type="entry name" value="Clathrin_H_link"/>
    <property type="match status" value="1"/>
</dbReference>
<dbReference type="Pfam" id="PF01394">
    <property type="entry name" value="Clathrin_propel"/>
    <property type="match status" value="2"/>
</dbReference>
<dbReference type="PIRSF" id="PIRSF002290">
    <property type="entry name" value="Clathrin_H_chain"/>
    <property type="match status" value="1"/>
</dbReference>
<dbReference type="SMART" id="SM00299">
    <property type="entry name" value="CLH"/>
    <property type="match status" value="7"/>
</dbReference>
<dbReference type="SUPFAM" id="SSF48371">
    <property type="entry name" value="ARM repeat"/>
    <property type="match status" value="5"/>
</dbReference>
<dbReference type="SUPFAM" id="SSF50989">
    <property type="entry name" value="Clathrin heavy-chain terminal domain"/>
    <property type="match status" value="1"/>
</dbReference>
<dbReference type="PROSITE" id="PS50236">
    <property type="entry name" value="CHCR"/>
    <property type="match status" value="7"/>
</dbReference>
<name>CLAH1_ARATH</name>
<keyword id="KW-0007">Acetylation</keyword>
<keyword id="KW-0168">Coated pit</keyword>
<keyword id="KW-0968">Cytoplasmic vesicle</keyword>
<keyword id="KW-0254">Endocytosis</keyword>
<keyword id="KW-0472">Membrane</keyword>
<keyword id="KW-1185">Reference proteome</keyword>
<keyword id="KW-0677">Repeat</keyword>
<accession>Q0WNJ6</accession>
<accession>Q0WM81</accession>
<accession>Q9SRM1</accession>
<sequence length="1705" mass="193245">MAAANAPIIMKEVLTLPSVGIGQQFITFTNVTMESDKYICVRETAPQNSVVIIDMNMPMQPLRRPITADSALMNPNSRILALKAQVPGTTQDHLQIFNIEAKAKLKSHQMPEQVAFWKWITPKMLGLVTQTSVYHWSIEGDSEPVKMFDRTANLANNQIINYKCSPNEKWLVLIGIAPGSPERPQLVKGNMQLFSVDQQRSQALEAHAASFAQFKVPGNENPSILISFASKSFNAGQITSKLHVIELGAQPGKPSFTKKQADLFFPPDFADDFPVAMQVSHKFNLIYVITKLGLLFVYDLETASAIYRNRISPDPIFLTSEASSVGGFYAINRRGQVLLATVNEATIIPFISGQLNNLELAVNLAKRGNLPGAENLVVQRFQELFAQTKYKEAAELAAESPQGILRTPDTVAKFQSVPVQAGQTPPLLQYFGTLLTRGKLNSYESLELSRLVVNQNKKNLLENWLAEDKLECSEELGDLVKTVDNDLALKIYIKARATPKVVAAFAERREFDKILIYSKQVGYTPDYMFLLQTILRTDPQGAVNFALMMSQMEGGCPVDYNTITDLFLQRNLIREATAFLLDVLKPNLPEHAFLQTKVLEINLVTFPNVADAILANGMFSHYDRPRVAQLCEKAGLYIQSLKHYSELPDIKRVIVNTHAIEPQALVEFFGTLSSEWAMECMKDLLLVNLRGNLQIIVQACKEYCEQLGVDACIKLFEQFKSYEGLYFFLGSYLSMSEDPEIHFKYIEAAAKTGQIKEVERVTRESNFYDAEKTKNFLMEAKLPDARPLINVCDRFGFVPDLTHYLYTNNMLRYIEGYVQKVNPGNAPLVVGQLLDDECPEDFIKGLILSVRSLLPVEPLVAECEKRNRLRLLTQFLEHLVSEGSQDVHVHNALGKIIIDSNNNPEHFLTTNPYYDSKVVGKYCEKRDPTLAVVAYRRGQCDEELINVTNKNSLFKLQARYVVERMDGDLWEKVLTEENEYRRQLIDQVVSTALPESKSPEQVSAAVKAFMTADLPHELIELLEKIVLQNSAFSGNFNLQNLLILTAIKADPSRVMDYINRLDNFDGPAVGEVAVDAQLYEEAFAIFKKFNLNVQAVNVLLDNVRSIERAVEFAFRVEEDAVWSQVAKAQLREGLVSDAIESFIRADDTTQFLEVIRASEDTNVYDDLVRYLLMVRQKVKEPKVDSELIYAYAKIERLGEIEEFILMPNVANLQHVGDRLYDEALYEAAKIIYAFISNWAKLAVTLVKLQQFQGAVDAARKANSAKTWKEVCFACVDAEEFRLAQICGLNIIIQVDDLEEVSEYYQNRGCFNELISLMESGLGLERAHMGIFTELGVLYARYRYEKLMEHIKLFSTRLNIPKLIRACDEQQHWQELTYLYIQYDEFDNAATTVMNHSPEAWEHMQFKDIVAKVANVELYYKAVHFYLQEHPDIINDLLNVLALRLDHTRVVDIMRKAGHLRLIKPYMVAVQSNNVSAVNEALNEIYAEEEDYDRLRESIDLHDSFDQIGLAQKIEKHELVEMRRVAAYIYKKAGRWKQSIALSKKDNMYKDCMETASQSGDHDLAEQLLVYFIEQGKKECFATCLFVCYDLIRPDVALELAWINNMIDFAFPYLLQFIREYSGKVDELIKDKLEAQKEVKAKEQEEKDVMSQQNMYAQLLPLALPAPPMPGMGGGGYGPPPQMGGMPGMSGMPPMPPYGMPPMGGY</sequence>